<keyword id="KW-0204">Cytolysis</keyword>
<keyword id="KW-1061">Dermonecrotic toxin</keyword>
<keyword id="KW-1015">Disulfide bond</keyword>
<keyword id="KW-0325">Glycoprotein</keyword>
<keyword id="KW-0354">Hemolysis</keyword>
<keyword id="KW-0442">Lipid degradation</keyword>
<keyword id="KW-0443">Lipid metabolism</keyword>
<keyword id="KW-0456">Lyase</keyword>
<keyword id="KW-0460">Magnesium</keyword>
<keyword id="KW-0479">Metal-binding</keyword>
<keyword id="KW-0964">Secreted</keyword>
<keyword id="KW-0800">Toxin</keyword>
<evidence type="ECO:0000250" key="1">
    <source>
        <dbReference type="UniProtKB" id="A0A0D4WTV1"/>
    </source>
</evidence>
<evidence type="ECO:0000250" key="2">
    <source>
        <dbReference type="UniProtKB" id="A0A0D4WV12"/>
    </source>
</evidence>
<evidence type="ECO:0000250" key="3">
    <source>
        <dbReference type="UniProtKB" id="P0CE80"/>
    </source>
</evidence>
<evidence type="ECO:0000250" key="4">
    <source>
        <dbReference type="UniProtKB" id="Q4ZFU2"/>
    </source>
</evidence>
<evidence type="ECO:0000250" key="5">
    <source>
        <dbReference type="UniProtKB" id="Q8I914"/>
    </source>
</evidence>
<evidence type="ECO:0000255" key="6"/>
<evidence type="ECO:0000303" key="7">
    <source>
    </source>
</evidence>
<evidence type="ECO:0000305" key="8"/>
<evidence type="ECO:0000305" key="9">
    <source>
    </source>
</evidence>
<organism>
    <name type="scientific">Loxosceles apachea</name>
    <name type="common">Apache recluse spider</name>
    <dbReference type="NCBI Taxonomy" id="571518"/>
    <lineage>
        <taxon>Eukaryota</taxon>
        <taxon>Metazoa</taxon>
        <taxon>Ecdysozoa</taxon>
        <taxon>Arthropoda</taxon>
        <taxon>Chelicerata</taxon>
        <taxon>Arachnida</taxon>
        <taxon>Araneae</taxon>
        <taxon>Araneomorphae</taxon>
        <taxon>Haplogynae</taxon>
        <taxon>Scytodoidea</taxon>
        <taxon>Sicariidae</taxon>
        <taxon>Loxosceles</taxon>
    </lineage>
</organism>
<proteinExistence type="evidence at transcript level"/>
<reference key="1">
    <citation type="journal article" date="2009" name="Mol. Biol. Evol.">
        <title>Molecular evolution, functional variation, and proposed nomenclature of the gene family that includes sphingomyelinase D in sicariid spider venoms.</title>
        <authorList>
            <person name="Binford G.J."/>
            <person name="Bodner M.R."/>
            <person name="Cordes M.H."/>
            <person name="Baldwin K.L."/>
            <person name="Rynerson M.R."/>
            <person name="Burns S.N."/>
            <person name="Zobel-Thropp P.A."/>
        </authorList>
    </citation>
    <scope>NUCLEOTIDE SEQUENCE [MRNA]</scope>
    <scope>NOMENCLATURE</scope>
    <source>
        <tissue>Venom gland</tissue>
    </source>
</reference>
<accession>C0JAV6</accession>
<dbReference type="EC" id="4.6.1.-" evidence="4"/>
<dbReference type="EMBL" id="FJ171391">
    <property type="protein sequence ID" value="ACN48887.1"/>
    <property type="molecule type" value="mRNA"/>
</dbReference>
<dbReference type="SMR" id="C0JAV6"/>
<dbReference type="GO" id="GO:0005576">
    <property type="term" value="C:extracellular region"/>
    <property type="evidence" value="ECO:0007669"/>
    <property type="project" value="UniProtKB-SubCell"/>
</dbReference>
<dbReference type="GO" id="GO:0016829">
    <property type="term" value="F:lyase activity"/>
    <property type="evidence" value="ECO:0007669"/>
    <property type="project" value="UniProtKB-KW"/>
</dbReference>
<dbReference type="GO" id="GO:0046872">
    <property type="term" value="F:metal ion binding"/>
    <property type="evidence" value="ECO:0007669"/>
    <property type="project" value="UniProtKB-KW"/>
</dbReference>
<dbReference type="GO" id="GO:0008081">
    <property type="term" value="F:phosphoric diester hydrolase activity"/>
    <property type="evidence" value="ECO:0007669"/>
    <property type="project" value="InterPro"/>
</dbReference>
<dbReference type="GO" id="GO:0090729">
    <property type="term" value="F:toxin activity"/>
    <property type="evidence" value="ECO:0007669"/>
    <property type="project" value="UniProtKB-KW"/>
</dbReference>
<dbReference type="GO" id="GO:0031640">
    <property type="term" value="P:killing of cells of another organism"/>
    <property type="evidence" value="ECO:0007669"/>
    <property type="project" value="UniProtKB-KW"/>
</dbReference>
<dbReference type="GO" id="GO:0016042">
    <property type="term" value="P:lipid catabolic process"/>
    <property type="evidence" value="ECO:0007669"/>
    <property type="project" value="UniProtKB-KW"/>
</dbReference>
<dbReference type="CDD" id="cd08576">
    <property type="entry name" value="GDPD_like_SMaseD_PLD"/>
    <property type="match status" value="1"/>
</dbReference>
<dbReference type="Gene3D" id="3.20.20.190">
    <property type="entry name" value="Phosphatidylinositol (PI) phosphodiesterase"/>
    <property type="match status" value="1"/>
</dbReference>
<dbReference type="InterPro" id="IPR017946">
    <property type="entry name" value="PLC-like_Pdiesterase_TIM-brl"/>
</dbReference>
<dbReference type="Pfam" id="PF13653">
    <property type="entry name" value="GDPD_2"/>
    <property type="match status" value="1"/>
</dbReference>
<dbReference type="SUPFAM" id="SSF51695">
    <property type="entry name" value="PLC-like phosphodiesterases"/>
    <property type="match status" value="1"/>
</dbReference>
<sequence length="273" mass="30407">WIMGHMVNAIAQIDEFVNLGANSIETDVSFDSSANPEYTYHGVPCDCGRTCTKWEHFNEFLKGLRKATTPGDSKYHEKLVLVVFDLKTGSLYDNQASDAGKKLAKSLLQNYWNNGNNGGRAYIVLSIPNLAHYKLITGFKEALTSEGHPELMDKVGYDFSGNDDIGDVANAYKKAGVTGHVWQSDGITNCLLRGLDRVRKAVANRDSSSGYINKVYYWTVDKRQSTRDALDAGVDGIMTNYPDVIADVLNESAYKAKFRIASYDDNPWETFKN</sequence>
<comment type="function">
    <text evidence="1 3">Dermonecrotic toxins cleave the phosphodiester linkage between the phosphate and headgroup of certain phospholipids (sphingolipid and lysolipid substrates), forming an alcohol (often choline) and a cyclic phosphate (By similarity). This toxin acts on sphingomyelin (SM) (By similarity). It may also act on ceramide phosphoethanolamine (CPE), lysophosphatidylcholine (LPC) and lysophosphatidylethanolamine (LPE), but not on lysophosphatidylserine (LPS), and lysophosphatidylglycerol (LPG) (By similarity). It acts by transphosphatidylation, releasing exclusively cyclic phosphate products as second products (By similarity). Induces dermonecrosis, hemolysis, increased vascular permeability, edema, inflammatory response, and platelet aggregation (By similarity).</text>
</comment>
<comment type="catalytic activity">
    <reaction evidence="1">
        <text>an N-(acyl)-sphingosylphosphocholine = an N-(acyl)-sphingosyl-1,3-cyclic phosphate + choline</text>
        <dbReference type="Rhea" id="RHEA:60652"/>
        <dbReference type="ChEBI" id="CHEBI:15354"/>
        <dbReference type="ChEBI" id="CHEBI:64583"/>
        <dbReference type="ChEBI" id="CHEBI:143892"/>
    </reaction>
</comment>
<comment type="catalytic activity">
    <reaction evidence="1">
        <text>an N-(acyl)-sphingosylphosphoethanolamine = an N-(acyl)-sphingosyl-1,3-cyclic phosphate + ethanolamine</text>
        <dbReference type="Rhea" id="RHEA:60648"/>
        <dbReference type="ChEBI" id="CHEBI:57603"/>
        <dbReference type="ChEBI" id="CHEBI:143891"/>
        <dbReference type="ChEBI" id="CHEBI:143892"/>
    </reaction>
</comment>
<comment type="catalytic activity">
    <reaction evidence="1">
        <text>a 1-acyl-sn-glycero-3-phosphocholine = a 1-acyl-sn-glycero-2,3-cyclic phosphate + choline</text>
        <dbReference type="Rhea" id="RHEA:60700"/>
        <dbReference type="ChEBI" id="CHEBI:15354"/>
        <dbReference type="ChEBI" id="CHEBI:58168"/>
        <dbReference type="ChEBI" id="CHEBI:143947"/>
    </reaction>
</comment>
<comment type="catalytic activity">
    <reaction evidence="1">
        <text>a 1-acyl-sn-glycero-3-phosphoethanolamine = a 1-acyl-sn-glycero-2,3-cyclic phosphate + ethanolamine</text>
        <dbReference type="Rhea" id="RHEA:60704"/>
        <dbReference type="ChEBI" id="CHEBI:57603"/>
        <dbReference type="ChEBI" id="CHEBI:64381"/>
        <dbReference type="ChEBI" id="CHEBI:143947"/>
    </reaction>
</comment>
<comment type="cofactor">
    <cofactor evidence="5">
        <name>Mg(2+)</name>
        <dbReference type="ChEBI" id="CHEBI:18420"/>
    </cofactor>
    <text evidence="5">Binds 1 Mg(2+) ion per subunit.</text>
</comment>
<comment type="subcellular location">
    <subcellularLocation>
        <location evidence="9">Secreted</location>
    </subcellularLocation>
</comment>
<comment type="tissue specificity">
    <text evidence="9">Expressed by the venom gland.</text>
</comment>
<comment type="similarity">
    <text evidence="8">Belongs to the arthropod phospholipase D family. Class II subfamily.</text>
</comment>
<comment type="caution">
    <text evidence="1 2 4">The most common activity assay for dermonecrotic toxins detects enzymatic activity by monitoring choline release from substrate. Liberation of choline from sphingomyelin (SM) or lysophosphatidylcholine (LPC) is commonly assumed to result from substrate hydrolysis, giving either ceramide-1-phosphate (C1P) or lysophosphatidic acid (LPA), respectively, as a second product. However, two studies from Lajoie and colleagues (2013 and 2015) report the observation of exclusive formation of cyclic phosphate products as second products, resulting from intramolecular transphosphatidylation. Cyclic phosphates have vastly different biological properties from their monoester counterparts, and they may be relevant to the pathology of brown spider envenomation.</text>
</comment>
<feature type="chain" id="PRO_0000392774" description="Dermonecrotic toxin LapSicTox-alphaIB1aiv">
    <location>
        <begin position="1" status="less than"/>
        <end position="273"/>
    </location>
</feature>
<feature type="active site" evidence="5">
    <location>
        <position position="5"/>
    </location>
</feature>
<feature type="active site" description="Nucleophile" evidence="5">
    <location>
        <position position="41"/>
    </location>
</feature>
<feature type="binding site" evidence="5">
    <location>
        <position position="25"/>
    </location>
    <ligand>
        <name>Mg(2+)</name>
        <dbReference type="ChEBI" id="CHEBI:18420"/>
    </ligand>
</feature>
<feature type="binding site" evidence="5">
    <location>
        <position position="27"/>
    </location>
    <ligand>
        <name>Mg(2+)</name>
        <dbReference type="ChEBI" id="CHEBI:18420"/>
    </ligand>
</feature>
<feature type="binding site" evidence="5">
    <location>
        <position position="85"/>
    </location>
    <ligand>
        <name>Mg(2+)</name>
        <dbReference type="ChEBI" id="CHEBI:18420"/>
    </ligand>
</feature>
<feature type="glycosylation site" description="N-linked (GlcNAc...) asparagine" evidence="6">
    <location>
        <position position="250"/>
    </location>
</feature>
<feature type="disulfide bond" evidence="3">
    <location>
        <begin position="45"/>
        <end position="51"/>
    </location>
</feature>
<feature type="disulfide bond" evidence="3">
    <location>
        <begin position="47"/>
        <end position="190"/>
    </location>
</feature>
<feature type="non-terminal residue">
    <location>
        <position position="1"/>
    </location>
</feature>
<protein>
    <recommendedName>
        <fullName evidence="7">Dermonecrotic toxin LapSicTox-alphaIB1aiv</fullName>
        <ecNumber evidence="4">4.6.1.-</ecNumber>
    </recommendedName>
    <alternativeName>
        <fullName>Phospholipase D</fullName>
        <shortName>PLD</shortName>
    </alternativeName>
    <alternativeName>
        <fullName>Sphingomyelin phosphodiesterase D</fullName>
        <shortName>SMD</shortName>
        <shortName>SMase D</shortName>
        <shortName>Sphingomyelinase D</shortName>
    </alternativeName>
</protein>
<name>A1KA4_LOXAP</name>